<name>MSHC_MYCTF</name>
<feature type="chain" id="PRO_0000400467" description="L-cysteine:1D-myo-inositol 2-amino-2-deoxy-alpha-D-glucopyranoside ligase">
    <location>
        <begin position="1"/>
        <end position="414"/>
    </location>
</feature>
<feature type="short sequence motif" description="'HIGH' region" evidence="1">
    <location>
        <begin position="45"/>
        <end position="55"/>
    </location>
</feature>
<feature type="short sequence motif" description="'ERGGDP' region" evidence="1">
    <location>
        <begin position="189"/>
        <end position="194"/>
    </location>
</feature>
<feature type="short sequence motif" description="'KMSKS' region" evidence="1">
    <location>
        <begin position="291"/>
        <end position="295"/>
    </location>
</feature>
<feature type="binding site" evidence="1">
    <location>
        <begin position="43"/>
        <end position="46"/>
    </location>
    <ligand>
        <name>L-cysteinyl-5'-AMP</name>
        <dbReference type="ChEBI" id="CHEBI:144924"/>
    </ligand>
</feature>
<feature type="binding site" evidence="1">
    <location>
        <position position="43"/>
    </location>
    <ligand>
        <name>Zn(2+)</name>
        <dbReference type="ChEBI" id="CHEBI:29105"/>
    </ligand>
</feature>
<feature type="binding site" evidence="1">
    <location>
        <position position="58"/>
    </location>
    <ligand>
        <name>L-cysteinyl-5'-AMP</name>
        <dbReference type="ChEBI" id="CHEBI:144924"/>
    </ligand>
</feature>
<feature type="binding site" evidence="1">
    <location>
        <begin position="81"/>
        <end position="83"/>
    </location>
    <ligand>
        <name>L-cysteinyl-5'-AMP</name>
        <dbReference type="ChEBI" id="CHEBI:144924"/>
    </ligand>
</feature>
<feature type="binding site" evidence="1">
    <location>
        <position position="229"/>
    </location>
    <ligand>
        <name>L-cysteinyl-5'-AMP</name>
        <dbReference type="ChEBI" id="CHEBI:144924"/>
    </ligand>
</feature>
<feature type="binding site" evidence="1">
    <location>
        <position position="233"/>
    </location>
    <ligand>
        <name>Zn(2+)</name>
        <dbReference type="ChEBI" id="CHEBI:29105"/>
    </ligand>
</feature>
<feature type="binding site" evidence="1">
    <location>
        <begin position="251"/>
        <end position="253"/>
    </location>
    <ligand>
        <name>L-cysteinyl-5'-AMP</name>
        <dbReference type="ChEBI" id="CHEBI:144924"/>
    </ligand>
</feature>
<feature type="binding site" evidence="1">
    <location>
        <position position="258"/>
    </location>
    <ligand>
        <name>Zn(2+)</name>
        <dbReference type="ChEBI" id="CHEBI:29105"/>
    </ligand>
</feature>
<feature type="binding site" evidence="1">
    <location>
        <position position="285"/>
    </location>
    <ligand>
        <name>L-cysteinyl-5'-AMP</name>
        <dbReference type="ChEBI" id="CHEBI:144924"/>
    </ligand>
</feature>
<keyword id="KW-0067">ATP-binding</keyword>
<keyword id="KW-0436">Ligase</keyword>
<keyword id="KW-0479">Metal-binding</keyword>
<keyword id="KW-0547">Nucleotide-binding</keyword>
<keyword id="KW-0862">Zinc</keyword>
<evidence type="ECO:0000255" key="1">
    <source>
        <dbReference type="HAMAP-Rule" id="MF_01697"/>
    </source>
</evidence>
<proteinExistence type="inferred from homology"/>
<gene>
    <name evidence="1" type="primary">mshC</name>
    <name type="ordered locus">TBFG_12161</name>
</gene>
<accession>A5WPA3</accession>
<dbReference type="EC" id="6.3.1.13" evidence="1"/>
<dbReference type="EMBL" id="CP000717">
    <property type="protein sequence ID" value="ABR06492.1"/>
    <property type="molecule type" value="Genomic_DNA"/>
</dbReference>
<dbReference type="RefSeq" id="WP_003411091.1">
    <property type="nucleotide sequence ID" value="NZ_KK339377.1"/>
</dbReference>
<dbReference type="SMR" id="A5WPA3"/>
<dbReference type="KEGG" id="mtf:TBFG_12161"/>
<dbReference type="PATRIC" id="fig|336982.11.peg.2375"/>
<dbReference type="HOGENOM" id="CLU_013528_0_0_11"/>
<dbReference type="GO" id="GO:0005829">
    <property type="term" value="C:cytosol"/>
    <property type="evidence" value="ECO:0007669"/>
    <property type="project" value="TreeGrafter"/>
</dbReference>
<dbReference type="GO" id="GO:0005524">
    <property type="term" value="F:ATP binding"/>
    <property type="evidence" value="ECO:0007669"/>
    <property type="project" value="UniProtKB-KW"/>
</dbReference>
<dbReference type="GO" id="GO:0035446">
    <property type="term" value="F:cysteine-glucosaminylinositol ligase activity"/>
    <property type="evidence" value="ECO:0007669"/>
    <property type="project" value="UniProtKB-UniRule"/>
</dbReference>
<dbReference type="GO" id="GO:0004817">
    <property type="term" value="F:cysteine-tRNA ligase activity"/>
    <property type="evidence" value="ECO:0007669"/>
    <property type="project" value="TreeGrafter"/>
</dbReference>
<dbReference type="GO" id="GO:0008270">
    <property type="term" value="F:zinc ion binding"/>
    <property type="evidence" value="ECO:0007669"/>
    <property type="project" value="UniProtKB-UniRule"/>
</dbReference>
<dbReference type="GO" id="GO:0006423">
    <property type="term" value="P:cysteinyl-tRNA aminoacylation"/>
    <property type="evidence" value="ECO:0007669"/>
    <property type="project" value="TreeGrafter"/>
</dbReference>
<dbReference type="GO" id="GO:0010125">
    <property type="term" value="P:mycothiol biosynthetic process"/>
    <property type="evidence" value="ECO:0007669"/>
    <property type="project" value="UniProtKB-UniRule"/>
</dbReference>
<dbReference type="CDD" id="cd07955">
    <property type="entry name" value="Anticodon_Ia_Cys_like"/>
    <property type="match status" value="1"/>
</dbReference>
<dbReference type="CDD" id="cd00672">
    <property type="entry name" value="CysRS_core"/>
    <property type="match status" value="1"/>
</dbReference>
<dbReference type="FunFam" id="1.20.120.640:FF:000001">
    <property type="entry name" value="L-cysteine:1D-myo-inositol 2-amino-2-deoxy-alpha-D-glucopyranoside ligase"/>
    <property type="match status" value="1"/>
</dbReference>
<dbReference type="FunFam" id="3.40.50.620:FF:000134">
    <property type="entry name" value="L-cysteine:1D-myo-inositol 2-amino-2-deoxy-alpha-D-glucopyranoside ligase"/>
    <property type="match status" value="1"/>
</dbReference>
<dbReference type="Gene3D" id="1.20.120.640">
    <property type="entry name" value="Anticodon-binding domain of a subclass of class I aminoacyl-tRNA synthetases"/>
    <property type="match status" value="1"/>
</dbReference>
<dbReference type="Gene3D" id="3.40.50.620">
    <property type="entry name" value="HUPs"/>
    <property type="match status" value="1"/>
</dbReference>
<dbReference type="HAMAP" id="MF_01697">
    <property type="entry name" value="MshC"/>
    <property type="match status" value="1"/>
</dbReference>
<dbReference type="InterPro" id="IPR024909">
    <property type="entry name" value="Cys-tRNA/MSH_ligase"/>
</dbReference>
<dbReference type="InterPro" id="IPR017812">
    <property type="entry name" value="Mycothiol_ligase_MshC"/>
</dbReference>
<dbReference type="InterPro" id="IPR014729">
    <property type="entry name" value="Rossmann-like_a/b/a_fold"/>
</dbReference>
<dbReference type="InterPro" id="IPR032678">
    <property type="entry name" value="tRNA-synt_1_cat_dom"/>
</dbReference>
<dbReference type="NCBIfam" id="TIGR03447">
    <property type="entry name" value="mycothiol_MshC"/>
    <property type="match status" value="1"/>
</dbReference>
<dbReference type="PANTHER" id="PTHR10890:SF3">
    <property type="entry name" value="CYSTEINE--TRNA LIGASE, CYTOPLASMIC"/>
    <property type="match status" value="1"/>
</dbReference>
<dbReference type="PANTHER" id="PTHR10890">
    <property type="entry name" value="CYSTEINYL-TRNA SYNTHETASE"/>
    <property type="match status" value="1"/>
</dbReference>
<dbReference type="Pfam" id="PF01406">
    <property type="entry name" value="tRNA-synt_1e"/>
    <property type="match status" value="1"/>
</dbReference>
<dbReference type="PRINTS" id="PR00983">
    <property type="entry name" value="TRNASYNTHCYS"/>
</dbReference>
<dbReference type="SUPFAM" id="SSF52374">
    <property type="entry name" value="Nucleotidylyl transferase"/>
    <property type="match status" value="1"/>
</dbReference>
<reference key="1">
    <citation type="submission" date="2007-04" db="EMBL/GenBank/DDBJ databases">
        <title>The complete genome sequence of Mycobacterium tuberculosis F11.</title>
        <authorList>
            <person name="Birren B."/>
            <person name="Lander E."/>
            <person name="Galagan J."/>
            <person name="Devon K."/>
            <person name="Nusbaum C."/>
            <person name="Borowsky M.L."/>
            <person name="Grabherr M."/>
            <person name="Mauceli E."/>
            <person name="Brockman W."/>
            <person name="Young S."/>
            <person name="LaButti K."/>
            <person name="Pushparaj V."/>
            <person name="Sykes S."/>
            <person name="Baldwin J."/>
            <person name="Fitzgerald M."/>
            <person name="Bloom T."/>
            <person name="Zimmer A."/>
            <person name="Settipalli S."/>
            <person name="Shea T."/>
            <person name="Arachchi H."/>
            <person name="Macdonald P."/>
            <person name="Abouelleil A."/>
            <person name="Lui A."/>
            <person name="Priest M."/>
            <person name="Berlin A."/>
            <person name="Gearin G."/>
            <person name="Brown A."/>
            <person name="Aftuck L."/>
            <person name="Bessette D."/>
            <person name="Allen N."/>
            <person name="Lubonja R."/>
            <person name="Lokyitsang T."/>
            <person name="Matthews C."/>
            <person name="Dunbar C."/>
            <person name="Benamara M."/>
            <person name="Nguyen T."/>
            <person name="Negash T."/>
            <person name="DeCaprio D."/>
            <person name="Crawford M."/>
            <person name="Koehrsen M."/>
            <person name="Engels R."/>
            <person name="Montgomery P."/>
            <person name="Pearson M."/>
            <person name="Howarth C."/>
            <person name="Kodira C."/>
            <person name="Zeng Q."/>
            <person name="Yandava C."/>
            <person name="O'Leary S."/>
            <person name="Alvarado L."/>
            <person name="Victor T."/>
            <person name="Murray M."/>
        </authorList>
    </citation>
    <scope>NUCLEOTIDE SEQUENCE [LARGE SCALE GENOMIC DNA]</scope>
    <source>
        <strain>F11</strain>
    </source>
</reference>
<organism>
    <name type="scientific">Mycobacterium tuberculosis (strain F11)</name>
    <dbReference type="NCBI Taxonomy" id="336982"/>
    <lineage>
        <taxon>Bacteria</taxon>
        <taxon>Bacillati</taxon>
        <taxon>Actinomycetota</taxon>
        <taxon>Actinomycetes</taxon>
        <taxon>Mycobacteriales</taxon>
        <taxon>Mycobacteriaceae</taxon>
        <taxon>Mycobacterium</taxon>
        <taxon>Mycobacterium tuberculosis complex</taxon>
    </lineage>
</organism>
<sequence>MQSWYCPPVPVLPGRGPQLRLYDSADRQVRPVAPGSKATMYVCGITPYDATHLGHAATYVTFDLIHRLWLDLGHELHYVQNITDIDDPLFERADRDGVDWRDLAQAEVALFCEDMAALRVLPPQDYVGATEAIAEMVELIEKMLACGAAYVIDREMGEYQDIYFRADATLQFGYESGYDRDTMLRLCEERGGDPRRPGKSDELDALLWRAARPGEPSWPSPFGPGRPGWHVECAAIALSRIGSGLDIQGGGSDLIFPHHEFTAAHAECVSGERRFARHYVHAGMIGWDGHKMSKSRGNLVLVSALRAQDVEPSAVRLGLLAGHYRADRFWSQQVLDEATARLHRWRTATALPAGPAAVDVVARVRRYLADDLDTPKAIAALDGWVTDAVEYGGHDAGAPKLVATAIDALLGVDL</sequence>
<protein>
    <recommendedName>
        <fullName evidence="1">L-cysteine:1D-myo-inositol 2-amino-2-deoxy-alpha-D-glucopyranoside ligase</fullName>
        <shortName evidence="1">L-Cys:GlcN-Ins ligase</shortName>
        <ecNumber evidence="1">6.3.1.13</ecNumber>
    </recommendedName>
    <alternativeName>
        <fullName evidence="1">Mycothiol ligase</fullName>
        <shortName evidence="1">MSH ligase</shortName>
    </alternativeName>
</protein>
<comment type="function">
    <text evidence="1">Catalyzes the ATP-dependent condensation of GlcN-Ins and L-cysteine to form L-Cys-GlcN-Ins.</text>
</comment>
<comment type="catalytic activity">
    <reaction evidence="1">
        <text>1D-myo-inositol 2-amino-2-deoxy-alpha-D-glucopyranoside + L-cysteine + ATP = 1D-myo-inositol 2-(L-cysteinylamino)-2-deoxy-alpha-D-glucopyranoside + AMP + diphosphate + H(+)</text>
        <dbReference type="Rhea" id="RHEA:26176"/>
        <dbReference type="ChEBI" id="CHEBI:15378"/>
        <dbReference type="ChEBI" id="CHEBI:30616"/>
        <dbReference type="ChEBI" id="CHEBI:33019"/>
        <dbReference type="ChEBI" id="CHEBI:35235"/>
        <dbReference type="ChEBI" id="CHEBI:58886"/>
        <dbReference type="ChEBI" id="CHEBI:58887"/>
        <dbReference type="ChEBI" id="CHEBI:456215"/>
        <dbReference type="EC" id="6.3.1.13"/>
    </reaction>
</comment>
<comment type="cofactor">
    <cofactor evidence="1">
        <name>Zn(2+)</name>
        <dbReference type="ChEBI" id="CHEBI:29105"/>
    </cofactor>
    <text evidence="1">Binds 1 zinc ion per subunit.</text>
</comment>
<comment type="subunit">
    <text evidence="1">Monomer.</text>
</comment>
<comment type="similarity">
    <text evidence="1">Belongs to the class-I aminoacyl-tRNA synthetase family. MshC subfamily.</text>
</comment>